<accession>Q6FIU2</accession>
<sequence length="447" mass="50111">MATNEEFIRTQIFGTVFEITNRYSDLNPVGMGAFGLVCSATDTLTNQQVAIKKIMKPFATAVLAKRTYRELKLLKHLRHENLICLQDIFLSPLEDIYFVTELQGTDLHRLLQTRPLEKQFVQYFHYQILRGLKYVHSAGVVHRDLKPSNILINENCDLKICDFGLARIQDPQMTGYVSTRYYRAPEIMLTWQKYDVEVDIWSAGCIFAEMIEGKPLFPGKDHVHQFSIITDLLGSPPSDVIDTICSENTLKFVTSLPHRDPIPFSERFKTVEPDAVDLLEKMLVFDPKKRITAADALAHPYLAPYHDPTDEPVAEAKFDWHFNDADLPVDTWRVMMYSEILDFHKIGGTDGQIDTSATFDDQVAAATVAAAQAQAHALAQAQMSQNMIDPNQLLNEDGTPVSGSIAENSSNSATTNLNGAAAGMNSASDTINEYANQAVHFANEFQQ</sequence>
<proteinExistence type="inferred from homology"/>
<keyword id="KW-0010">Activator</keyword>
<keyword id="KW-0067">ATP-binding</keyword>
<keyword id="KW-0963">Cytoplasm</keyword>
<keyword id="KW-0418">Kinase</keyword>
<keyword id="KW-0547">Nucleotide-binding</keyword>
<keyword id="KW-0539">Nucleus</keyword>
<keyword id="KW-0597">Phosphoprotein</keyword>
<keyword id="KW-1185">Reference proteome</keyword>
<keyword id="KW-0723">Serine/threonine-protein kinase</keyword>
<keyword id="KW-0804">Transcription</keyword>
<keyword id="KW-0805">Transcription regulation</keyword>
<keyword id="KW-0808">Transferase</keyword>
<protein>
    <recommendedName>
        <fullName>Mitogen-activated protein kinase HOG1</fullName>
        <shortName>MAP kinase HOG1</shortName>
        <ecNumber evidence="2">2.7.11.24</ecNumber>
    </recommendedName>
</protein>
<gene>
    <name type="primary">HOG1</name>
    <name type="ordered locus">CAGL0M11748g</name>
</gene>
<comment type="function">
    <text evidence="4">Proline-directed serine/threonine-protein kinase involved in a signal transduction pathway that is activated by changes in the osmolarity of the extracellular environment. Controls osmotic regulation of transcription of target genes.</text>
</comment>
<comment type="catalytic activity">
    <reaction evidence="2">
        <text>L-seryl-[protein] + ATP = O-phospho-L-seryl-[protein] + ADP + H(+)</text>
        <dbReference type="Rhea" id="RHEA:17989"/>
        <dbReference type="Rhea" id="RHEA-COMP:9863"/>
        <dbReference type="Rhea" id="RHEA-COMP:11604"/>
        <dbReference type="ChEBI" id="CHEBI:15378"/>
        <dbReference type="ChEBI" id="CHEBI:29999"/>
        <dbReference type="ChEBI" id="CHEBI:30616"/>
        <dbReference type="ChEBI" id="CHEBI:83421"/>
        <dbReference type="ChEBI" id="CHEBI:456216"/>
        <dbReference type="EC" id="2.7.11.24"/>
    </reaction>
    <physiologicalReaction direction="left-to-right" evidence="2">
        <dbReference type="Rhea" id="RHEA:17990"/>
    </physiologicalReaction>
</comment>
<comment type="catalytic activity">
    <reaction evidence="2">
        <text>L-threonyl-[protein] + ATP = O-phospho-L-threonyl-[protein] + ADP + H(+)</text>
        <dbReference type="Rhea" id="RHEA:46608"/>
        <dbReference type="Rhea" id="RHEA-COMP:11060"/>
        <dbReference type="Rhea" id="RHEA-COMP:11605"/>
        <dbReference type="ChEBI" id="CHEBI:15378"/>
        <dbReference type="ChEBI" id="CHEBI:30013"/>
        <dbReference type="ChEBI" id="CHEBI:30616"/>
        <dbReference type="ChEBI" id="CHEBI:61977"/>
        <dbReference type="ChEBI" id="CHEBI:456216"/>
        <dbReference type="EC" id="2.7.11.24"/>
    </reaction>
    <physiologicalReaction direction="left-to-right" evidence="2">
        <dbReference type="Rhea" id="RHEA:46609"/>
    </physiologicalReaction>
</comment>
<comment type="cofactor">
    <cofactor evidence="3">
        <name>Mg(2+)</name>
        <dbReference type="ChEBI" id="CHEBI:18420"/>
    </cofactor>
</comment>
<comment type="activity regulation">
    <text evidence="1">Activated by tyrosine and threonine phosphorylation.</text>
</comment>
<comment type="subcellular location">
    <subcellularLocation>
        <location evidence="1">Cytoplasm</location>
    </subcellularLocation>
    <subcellularLocation>
        <location evidence="1">Nucleus</location>
    </subcellularLocation>
</comment>
<comment type="domain">
    <text>The TXY motif contains the threonine and tyrosine residues whose phosphorylation activates the MAP kinases.</text>
</comment>
<comment type="PTM">
    <text evidence="1">Dually phosphorylated on Thr-174 and Tyr-176, which activates the enzyme.</text>
</comment>
<comment type="similarity">
    <text evidence="5">Belongs to the protein kinase superfamily. Ser/Thr protein kinase family. MAP kinase subfamily. HOG1 sub-subfamily.</text>
</comment>
<reference key="1">
    <citation type="journal article" date="2004" name="Nature">
        <title>Genome evolution in yeasts.</title>
        <authorList>
            <person name="Dujon B."/>
            <person name="Sherman D."/>
            <person name="Fischer G."/>
            <person name="Durrens P."/>
            <person name="Casaregola S."/>
            <person name="Lafontaine I."/>
            <person name="de Montigny J."/>
            <person name="Marck C."/>
            <person name="Neuveglise C."/>
            <person name="Talla E."/>
            <person name="Goffard N."/>
            <person name="Frangeul L."/>
            <person name="Aigle M."/>
            <person name="Anthouard V."/>
            <person name="Babour A."/>
            <person name="Barbe V."/>
            <person name="Barnay S."/>
            <person name="Blanchin S."/>
            <person name="Beckerich J.-M."/>
            <person name="Beyne E."/>
            <person name="Bleykasten C."/>
            <person name="Boisrame A."/>
            <person name="Boyer J."/>
            <person name="Cattolico L."/>
            <person name="Confanioleri F."/>
            <person name="de Daruvar A."/>
            <person name="Despons L."/>
            <person name="Fabre E."/>
            <person name="Fairhead C."/>
            <person name="Ferry-Dumazet H."/>
            <person name="Groppi A."/>
            <person name="Hantraye F."/>
            <person name="Hennequin C."/>
            <person name="Jauniaux N."/>
            <person name="Joyet P."/>
            <person name="Kachouri R."/>
            <person name="Kerrest A."/>
            <person name="Koszul R."/>
            <person name="Lemaire M."/>
            <person name="Lesur I."/>
            <person name="Ma L."/>
            <person name="Muller H."/>
            <person name="Nicaud J.-M."/>
            <person name="Nikolski M."/>
            <person name="Oztas S."/>
            <person name="Ozier-Kalogeropoulos O."/>
            <person name="Pellenz S."/>
            <person name="Potier S."/>
            <person name="Richard G.-F."/>
            <person name="Straub M.-L."/>
            <person name="Suleau A."/>
            <person name="Swennen D."/>
            <person name="Tekaia F."/>
            <person name="Wesolowski-Louvel M."/>
            <person name="Westhof E."/>
            <person name="Wirth B."/>
            <person name="Zeniou-Meyer M."/>
            <person name="Zivanovic Y."/>
            <person name="Bolotin-Fukuhara M."/>
            <person name="Thierry A."/>
            <person name="Bouchier C."/>
            <person name="Caudron B."/>
            <person name="Scarpelli C."/>
            <person name="Gaillardin C."/>
            <person name="Weissenbach J."/>
            <person name="Wincker P."/>
            <person name="Souciet J.-L."/>
        </authorList>
    </citation>
    <scope>NUCLEOTIDE SEQUENCE [LARGE SCALE GENOMIC DNA]</scope>
    <source>
        <strain>ATCC 2001 / BCRC 20586 / JCM 3761 / NBRC 0622 / NRRL Y-65 / CBS 138</strain>
    </source>
</reference>
<feature type="chain" id="PRO_0000186329" description="Mitogen-activated protein kinase HOG1">
    <location>
        <begin position="1"/>
        <end position="447"/>
    </location>
</feature>
<feature type="domain" description="Protein kinase" evidence="5">
    <location>
        <begin position="23"/>
        <end position="302"/>
    </location>
</feature>
<feature type="region of interest" description="Disordered" evidence="7">
    <location>
        <begin position="394"/>
        <end position="414"/>
    </location>
</feature>
<feature type="short sequence motif" description="TXY">
    <location>
        <begin position="174"/>
        <end position="176"/>
    </location>
</feature>
<feature type="compositionally biased region" description="Polar residues" evidence="7">
    <location>
        <begin position="401"/>
        <end position="414"/>
    </location>
</feature>
<feature type="active site" description="Proton acceptor" evidence="5 6">
    <location>
        <position position="144"/>
    </location>
</feature>
<feature type="binding site" evidence="5">
    <location>
        <begin position="29"/>
        <end position="37"/>
    </location>
    <ligand>
        <name>ATP</name>
        <dbReference type="ChEBI" id="CHEBI:30616"/>
    </ligand>
</feature>
<feature type="binding site" evidence="5">
    <location>
        <position position="52"/>
    </location>
    <ligand>
        <name>ATP</name>
        <dbReference type="ChEBI" id="CHEBI:30616"/>
    </ligand>
</feature>
<feature type="modified residue" description="Phosphothreonine" evidence="1">
    <location>
        <position position="174"/>
    </location>
</feature>
<feature type="modified residue" description="Phosphotyrosine" evidence="1">
    <location>
        <position position="176"/>
    </location>
</feature>
<name>HOG1_CANGA</name>
<dbReference type="EC" id="2.7.11.24" evidence="2"/>
<dbReference type="EMBL" id="CR380959">
    <property type="protein sequence ID" value="CAG62832.1"/>
    <property type="molecule type" value="Genomic_DNA"/>
</dbReference>
<dbReference type="RefSeq" id="XP_449852.1">
    <property type="nucleotide sequence ID" value="XM_449852.1"/>
</dbReference>
<dbReference type="SMR" id="Q6FIU2"/>
<dbReference type="FunCoup" id="Q6FIU2">
    <property type="interactions" value="802"/>
</dbReference>
<dbReference type="STRING" id="284593.Q6FIU2"/>
<dbReference type="EnsemblFungi" id="CAGL0M11748g-T">
    <property type="protein sequence ID" value="CAGL0M11748g-T-p1"/>
    <property type="gene ID" value="CAGL0M11748g"/>
</dbReference>
<dbReference type="GeneID" id="2891247"/>
<dbReference type="KEGG" id="cgr:2891247"/>
<dbReference type="CGD" id="CAL0136993">
    <property type="gene designation" value="HOG1"/>
</dbReference>
<dbReference type="VEuPathDB" id="FungiDB:B1J91_M11748g"/>
<dbReference type="VEuPathDB" id="FungiDB:CAGL0M11748g"/>
<dbReference type="eggNOG" id="KOG0660">
    <property type="taxonomic scope" value="Eukaryota"/>
</dbReference>
<dbReference type="HOGENOM" id="CLU_000288_181_1_1"/>
<dbReference type="InParanoid" id="Q6FIU2"/>
<dbReference type="OMA" id="NRYTDLN"/>
<dbReference type="PHI-base" id="PHI:4625"/>
<dbReference type="PHI-base" id="PHI:8395"/>
<dbReference type="Proteomes" id="UP000002428">
    <property type="component" value="Chromosome M"/>
</dbReference>
<dbReference type="GO" id="GO:0000785">
    <property type="term" value="C:chromatin"/>
    <property type="evidence" value="ECO:0007669"/>
    <property type="project" value="EnsemblFungi"/>
</dbReference>
<dbReference type="GO" id="GO:0005758">
    <property type="term" value="C:mitochondrial intermembrane space"/>
    <property type="evidence" value="ECO:0007669"/>
    <property type="project" value="EnsemblFungi"/>
</dbReference>
<dbReference type="GO" id="GO:0005634">
    <property type="term" value="C:nucleus"/>
    <property type="evidence" value="ECO:0000314"/>
    <property type="project" value="CGD"/>
</dbReference>
<dbReference type="GO" id="GO:0005524">
    <property type="term" value="F:ATP binding"/>
    <property type="evidence" value="ECO:0007669"/>
    <property type="project" value="UniProtKB-KW"/>
</dbReference>
<dbReference type="GO" id="GO:0005516">
    <property type="term" value="F:calmodulin binding"/>
    <property type="evidence" value="ECO:0007669"/>
    <property type="project" value="EnsemblFungi"/>
</dbReference>
<dbReference type="GO" id="GO:0003682">
    <property type="term" value="F:chromatin binding"/>
    <property type="evidence" value="ECO:0007669"/>
    <property type="project" value="EnsemblFungi"/>
</dbReference>
<dbReference type="GO" id="GO:0004707">
    <property type="term" value="F:MAP kinase activity"/>
    <property type="evidence" value="ECO:0000315"/>
    <property type="project" value="CGD"/>
</dbReference>
<dbReference type="GO" id="GO:0106310">
    <property type="term" value="F:protein serine kinase activity"/>
    <property type="evidence" value="ECO:0007669"/>
    <property type="project" value="RHEA"/>
</dbReference>
<dbReference type="GO" id="GO:0008353">
    <property type="term" value="F:RNA polymerase II CTD heptapeptide repeat kinase activity"/>
    <property type="evidence" value="ECO:0007669"/>
    <property type="project" value="EnsemblFungi"/>
</dbReference>
<dbReference type="GO" id="GO:0007155">
    <property type="term" value="P:cell adhesion"/>
    <property type="evidence" value="ECO:0000315"/>
    <property type="project" value="CGD"/>
</dbReference>
<dbReference type="GO" id="GO:0071474">
    <property type="term" value="P:cellular hyperosmotic response"/>
    <property type="evidence" value="ECO:0007669"/>
    <property type="project" value="EnsemblFungi"/>
</dbReference>
<dbReference type="GO" id="GO:0034599">
    <property type="term" value="P:cellular response to oxidative stress"/>
    <property type="evidence" value="ECO:0007669"/>
    <property type="project" value="EnsemblFungi"/>
</dbReference>
<dbReference type="GO" id="GO:0006879">
    <property type="term" value="P:intracellular iron ion homeostasis"/>
    <property type="evidence" value="ECO:0000315"/>
    <property type="project" value="CGD"/>
</dbReference>
<dbReference type="GO" id="GO:1990625">
    <property type="term" value="P:negative regulation of cytoplasmic translational initiation in response to stress"/>
    <property type="evidence" value="ECO:0007669"/>
    <property type="project" value="EnsemblFungi"/>
</dbReference>
<dbReference type="GO" id="GO:0001100">
    <property type="term" value="P:negative regulation of exit from mitosis"/>
    <property type="evidence" value="ECO:0007669"/>
    <property type="project" value="EnsemblFungi"/>
</dbReference>
<dbReference type="GO" id="GO:0010972">
    <property type="term" value="P:negative regulation of G2/M transition of mitotic cell cycle"/>
    <property type="evidence" value="ECO:0007669"/>
    <property type="project" value="EnsemblFungi"/>
</dbReference>
<dbReference type="GO" id="GO:0010515">
    <property type="term" value="P:negative regulation of induction of conjugation with cellular fusion"/>
    <property type="evidence" value="ECO:0007669"/>
    <property type="project" value="EnsemblFungi"/>
</dbReference>
<dbReference type="GO" id="GO:0007231">
    <property type="term" value="P:osmosensory signaling pathway"/>
    <property type="evidence" value="ECO:0007669"/>
    <property type="project" value="EnsemblFungi"/>
</dbReference>
<dbReference type="GO" id="GO:0038066">
    <property type="term" value="P:p38MAPK cascade"/>
    <property type="evidence" value="ECO:0007669"/>
    <property type="project" value="EnsemblFungi"/>
</dbReference>
<dbReference type="GO" id="GO:0010971">
    <property type="term" value="P:positive regulation of G2/M transition of mitotic cell cycle"/>
    <property type="evidence" value="ECO:0007669"/>
    <property type="project" value="EnsemblFungi"/>
</dbReference>
<dbReference type="GO" id="GO:0042307">
    <property type="term" value="P:positive regulation of protein import into nucleus"/>
    <property type="evidence" value="ECO:0007669"/>
    <property type="project" value="EnsemblFungi"/>
</dbReference>
<dbReference type="GO" id="GO:0045944">
    <property type="term" value="P:positive regulation of transcription by RNA polymerase II"/>
    <property type="evidence" value="ECO:0007669"/>
    <property type="project" value="EnsemblFungi"/>
</dbReference>
<dbReference type="GO" id="GO:1903715">
    <property type="term" value="P:regulation of aerobic respiration"/>
    <property type="evidence" value="ECO:0007669"/>
    <property type="project" value="EnsemblFungi"/>
</dbReference>
<dbReference type="GO" id="GO:0016241">
    <property type="term" value="P:regulation of macroautophagy"/>
    <property type="evidence" value="ECO:0007669"/>
    <property type="project" value="EnsemblFungi"/>
</dbReference>
<dbReference type="GO" id="GO:0051445">
    <property type="term" value="P:regulation of meiotic cell cycle"/>
    <property type="evidence" value="ECO:0007669"/>
    <property type="project" value="EnsemblFungi"/>
</dbReference>
<dbReference type="GO" id="GO:0033262">
    <property type="term" value="P:regulation of nuclear cell cycle DNA replication"/>
    <property type="evidence" value="ECO:0007669"/>
    <property type="project" value="EnsemblFungi"/>
</dbReference>
<dbReference type="GO" id="GO:0010520">
    <property type="term" value="P:regulation of reciprocal meiotic recombination"/>
    <property type="evidence" value="ECO:0007669"/>
    <property type="project" value="EnsemblFungi"/>
</dbReference>
<dbReference type="GO" id="GO:0051403">
    <property type="term" value="P:stress-activated MAPK cascade"/>
    <property type="evidence" value="ECO:0007669"/>
    <property type="project" value="InterPro"/>
</dbReference>
<dbReference type="CDD" id="cd07856">
    <property type="entry name" value="STKc_Sty1_Hog1"/>
    <property type="match status" value="1"/>
</dbReference>
<dbReference type="FunFam" id="1.10.510.10:FF:000049">
    <property type="entry name" value="Mitogen-activated protein kinase"/>
    <property type="match status" value="1"/>
</dbReference>
<dbReference type="FunFam" id="3.30.200.20:FF:000050">
    <property type="entry name" value="Mitogen-activated protein kinase"/>
    <property type="match status" value="1"/>
</dbReference>
<dbReference type="Gene3D" id="3.30.200.20">
    <property type="entry name" value="Phosphorylase Kinase, domain 1"/>
    <property type="match status" value="1"/>
</dbReference>
<dbReference type="Gene3D" id="1.10.510.10">
    <property type="entry name" value="Transferase(Phosphotransferase) domain 1"/>
    <property type="match status" value="1"/>
</dbReference>
<dbReference type="InterPro" id="IPR011009">
    <property type="entry name" value="Kinase-like_dom_sf"/>
</dbReference>
<dbReference type="InterPro" id="IPR050117">
    <property type="entry name" value="MAP_kinase"/>
</dbReference>
<dbReference type="InterPro" id="IPR003527">
    <property type="entry name" value="MAP_kinase_CS"/>
</dbReference>
<dbReference type="InterPro" id="IPR008352">
    <property type="entry name" value="MAPK_p38-like"/>
</dbReference>
<dbReference type="InterPro" id="IPR038783">
    <property type="entry name" value="MAPK_Sty1/Hog1"/>
</dbReference>
<dbReference type="InterPro" id="IPR000719">
    <property type="entry name" value="Prot_kinase_dom"/>
</dbReference>
<dbReference type="InterPro" id="IPR017441">
    <property type="entry name" value="Protein_kinase_ATP_BS"/>
</dbReference>
<dbReference type="InterPro" id="IPR008271">
    <property type="entry name" value="Ser/Thr_kinase_AS"/>
</dbReference>
<dbReference type="PANTHER" id="PTHR24055">
    <property type="entry name" value="MITOGEN-ACTIVATED PROTEIN KINASE"/>
    <property type="match status" value="1"/>
</dbReference>
<dbReference type="Pfam" id="PF00069">
    <property type="entry name" value="Pkinase"/>
    <property type="match status" value="1"/>
</dbReference>
<dbReference type="PRINTS" id="PR01773">
    <property type="entry name" value="P38MAPKINASE"/>
</dbReference>
<dbReference type="SMART" id="SM00220">
    <property type="entry name" value="S_TKc"/>
    <property type="match status" value="1"/>
</dbReference>
<dbReference type="SUPFAM" id="SSF56112">
    <property type="entry name" value="Protein kinase-like (PK-like)"/>
    <property type="match status" value="1"/>
</dbReference>
<dbReference type="PROSITE" id="PS01351">
    <property type="entry name" value="MAPK"/>
    <property type="match status" value="1"/>
</dbReference>
<dbReference type="PROSITE" id="PS00107">
    <property type="entry name" value="PROTEIN_KINASE_ATP"/>
    <property type="match status" value="1"/>
</dbReference>
<dbReference type="PROSITE" id="PS50011">
    <property type="entry name" value="PROTEIN_KINASE_DOM"/>
    <property type="match status" value="1"/>
</dbReference>
<dbReference type="PROSITE" id="PS00108">
    <property type="entry name" value="PROTEIN_KINASE_ST"/>
    <property type="match status" value="1"/>
</dbReference>
<organism>
    <name type="scientific">Candida glabrata (strain ATCC 2001 / BCRC 20586 / JCM 3761 / NBRC 0622 / NRRL Y-65 / CBS 138)</name>
    <name type="common">Yeast</name>
    <name type="synonym">Nakaseomyces glabratus</name>
    <dbReference type="NCBI Taxonomy" id="284593"/>
    <lineage>
        <taxon>Eukaryota</taxon>
        <taxon>Fungi</taxon>
        <taxon>Dikarya</taxon>
        <taxon>Ascomycota</taxon>
        <taxon>Saccharomycotina</taxon>
        <taxon>Saccharomycetes</taxon>
        <taxon>Saccharomycetales</taxon>
        <taxon>Saccharomycetaceae</taxon>
        <taxon>Nakaseomyces</taxon>
    </lineage>
</organism>
<evidence type="ECO:0000250" key="1"/>
<evidence type="ECO:0000250" key="2">
    <source>
        <dbReference type="UniProtKB" id="P32485"/>
    </source>
</evidence>
<evidence type="ECO:0000250" key="3">
    <source>
        <dbReference type="UniProtKB" id="Q16539"/>
    </source>
</evidence>
<evidence type="ECO:0000250" key="4">
    <source>
        <dbReference type="UniProtKB" id="Q4WSF6"/>
    </source>
</evidence>
<evidence type="ECO:0000255" key="5">
    <source>
        <dbReference type="PROSITE-ProRule" id="PRU00159"/>
    </source>
</evidence>
<evidence type="ECO:0000255" key="6">
    <source>
        <dbReference type="PROSITE-ProRule" id="PRU10027"/>
    </source>
</evidence>
<evidence type="ECO:0000256" key="7">
    <source>
        <dbReference type="SAM" id="MobiDB-lite"/>
    </source>
</evidence>